<feature type="chain" id="PRO_0000152151" description="Leucine--tRNA ligase, cytoplasmic">
    <location>
        <begin position="1"/>
        <end position="1178"/>
    </location>
</feature>
<feature type="region of interest" description="Editing domain" evidence="2">
    <location>
        <begin position="262"/>
        <end position="511"/>
    </location>
</feature>
<feature type="short sequence motif" description="'HIGH' region" evidence="2">
    <location>
        <begin position="62"/>
        <end position="65"/>
    </location>
</feature>
<feature type="short sequence motif" description="'KMSKS' region" evidence="2">
    <location>
        <begin position="718"/>
        <end position="722"/>
    </location>
</feature>
<feature type="binding site" evidence="2">
    <location>
        <position position="54"/>
    </location>
    <ligand>
        <name>L-leucine</name>
        <dbReference type="ChEBI" id="CHEBI:57427"/>
    </ligand>
</feature>
<feature type="binding site" evidence="2">
    <location>
        <position position="56"/>
    </location>
    <ligand>
        <name>L-leucine</name>
        <dbReference type="ChEBI" id="CHEBI:57427"/>
    </ligand>
</feature>
<feature type="binding site" evidence="2">
    <location>
        <position position="596"/>
    </location>
    <ligand>
        <name>L-leucine</name>
        <dbReference type="ChEBI" id="CHEBI:57427"/>
    </ligand>
</feature>
<feature type="binding site" evidence="2">
    <location>
        <position position="599"/>
    </location>
    <ligand>
        <name>L-leucine</name>
        <dbReference type="ChEBI" id="CHEBI:57427"/>
    </ligand>
</feature>
<feature type="binding site" evidence="2">
    <location>
        <position position="721"/>
    </location>
    <ligand>
        <name>ATP</name>
        <dbReference type="ChEBI" id="CHEBI:30616"/>
    </ligand>
</feature>
<feature type="modified residue" description="Phosphoserine" evidence="2">
    <location>
        <position position="169"/>
    </location>
</feature>
<feature type="modified residue" description="Phosphoserine" evidence="2">
    <location>
        <position position="722"/>
    </location>
</feature>
<feature type="modified residue" description="N6-acetyllysine" evidence="4">
    <location>
        <position position="972"/>
    </location>
</feature>
<feature type="modified residue" description="N6-acetyllysine" evidence="4">
    <location>
        <position position="1049"/>
    </location>
</feature>
<feature type="sequence conflict" description="In Ref. 1; BAC33766." evidence="3" ref="1">
    <original>S</original>
    <variation>P</variation>
    <location>
        <position position="218"/>
    </location>
</feature>
<feature type="sequence conflict" description="In Ref. 1; BAC33766." evidence="3" ref="1">
    <original>C</original>
    <variation>S</variation>
    <location>
        <position position="869"/>
    </location>
</feature>
<feature type="sequence conflict" description="In Ref. 1; BAC27133." evidence="3" ref="1">
    <original>L</original>
    <variation>Q</variation>
    <location>
        <position position="954"/>
    </location>
</feature>
<feature type="sequence conflict" description="In Ref. 1; BAC27133." evidence="3" ref="1">
    <original>P</original>
    <variation>H</variation>
    <location>
        <position position="1127"/>
    </location>
</feature>
<protein>
    <recommendedName>
        <fullName evidence="2">Leucine--tRNA ligase, cytoplasmic</fullName>
        <ecNumber evidence="2">6.1.1.4</ecNumber>
    </recommendedName>
    <alternativeName>
        <fullName evidence="2">Leucyl-tRNA synthetase</fullName>
        <shortName evidence="2">LeuRS</shortName>
    </alternativeName>
</protein>
<evidence type="ECO:0000250" key="1"/>
<evidence type="ECO:0000250" key="2">
    <source>
        <dbReference type="UniProtKB" id="Q9P2J5"/>
    </source>
</evidence>
<evidence type="ECO:0000305" key="3"/>
<evidence type="ECO:0007744" key="4">
    <source>
    </source>
</evidence>
<reference key="1">
    <citation type="journal article" date="2005" name="Science">
        <title>The transcriptional landscape of the mammalian genome.</title>
        <authorList>
            <person name="Carninci P."/>
            <person name="Kasukawa T."/>
            <person name="Katayama S."/>
            <person name="Gough J."/>
            <person name="Frith M.C."/>
            <person name="Maeda N."/>
            <person name="Oyama R."/>
            <person name="Ravasi T."/>
            <person name="Lenhard B."/>
            <person name="Wells C."/>
            <person name="Kodzius R."/>
            <person name="Shimokawa K."/>
            <person name="Bajic V.B."/>
            <person name="Brenner S.E."/>
            <person name="Batalov S."/>
            <person name="Forrest A.R."/>
            <person name="Zavolan M."/>
            <person name="Davis M.J."/>
            <person name="Wilming L.G."/>
            <person name="Aidinis V."/>
            <person name="Allen J.E."/>
            <person name="Ambesi-Impiombato A."/>
            <person name="Apweiler R."/>
            <person name="Aturaliya R.N."/>
            <person name="Bailey T.L."/>
            <person name="Bansal M."/>
            <person name="Baxter L."/>
            <person name="Beisel K.W."/>
            <person name="Bersano T."/>
            <person name="Bono H."/>
            <person name="Chalk A.M."/>
            <person name="Chiu K.P."/>
            <person name="Choudhary V."/>
            <person name="Christoffels A."/>
            <person name="Clutterbuck D.R."/>
            <person name="Crowe M.L."/>
            <person name="Dalla E."/>
            <person name="Dalrymple B.P."/>
            <person name="de Bono B."/>
            <person name="Della Gatta G."/>
            <person name="di Bernardo D."/>
            <person name="Down T."/>
            <person name="Engstrom P."/>
            <person name="Fagiolini M."/>
            <person name="Faulkner G."/>
            <person name="Fletcher C.F."/>
            <person name="Fukushima T."/>
            <person name="Furuno M."/>
            <person name="Futaki S."/>
            <person name="Gariboldi M."/>
            <person name="Georgii-Hemming P."/>
            <person name="Gingeras T.R."/>
            <person name="Gojobori T."/>
            <person name="Green R.E."/>
            <person name="Gustincich S."/>
            <person name="Harbers M."/>
            <person name="Hayashi Y."/>
            <person name="Hensch T.K."/>
            <person name="Hirokawa N."/>
            <person name="Hill D."/>
            <person name="Huminiecki L."/>
            <person name="Iacono M."/>
            <person name="Ikeo K."/>
            <person name="Iwama A."/>
            <person name="Ishikawa T."/>
            <person name="Jakt M."/>
            <person name="Kanapin A."/>
            <person name="Katoh M."/>
            <person name="Kawasawa Y."/>
            <person name="Kelso J."/>
            <person name="Kitamura H."/>
            <person name="Kitano H."/>
            <person name="Kollias G."/>
            <person name="Krishnan S.P."/>
            <person name="Kruger A."/>
            <person name="Kummerfeld S.K."/>
            <person name="Kurochkin I.V."/>
            <person name="Lareau L.F."/>
            <person name="Lazarevic D."/>
            <person name="Lipovich L."/>
            <person name="Liu J."/>
            <person name="Liuni S."/>
            <person name="McWilliam S."/>
            <person name="Madan Babu M."/>
            <person name="Madera M."/>
            <person name="Marchionni L."/>
            <person name="Matsuda H."/>
            <person name="Matsuzawa S."/>
            <person name="Miki H."/>
            <person name="Mignone F."/>
            <person name="Miyake S."/>
            <person name="Morris K."/>
            <person name="Mottagui-Tabar S."/>
            <person name="Mulder N."/>
            <person name="Nakano N."/>
            <person name="Nakauchi H."/>
            <person name="Ng P."/>
            <person name="Nilsson R."/>
            <person name="Nishiguchi S."/>
            <person name="Nishikawa S."/>
            <person name="Nori F."/>
            <person name="Ohara O."/>
            <person name="Okazaki Y."/>
            <person name="Orlando V."/>
            <person name="Pang K.C."/>
            <person name="Pavan W.J."/>
            <person name="Pavesi G."/>
            <person name="Pesole G."/>
            <person name="Petrovsky N."/>
            <person name="Piazza S."/>
            <person name="Reed J."/>
            <person name="Reid J.F."/>
            <person name="Ring B.Z."/>
            <person name="Ringwald M."/>
            <person name="Rost B."/>
            <person name="Ruan Y."/>
            <person name="Salzberg S.L."/>
            <person name="Sandelin A."/>
            <person name="Schneider C."/>
            <person name="Schoenbach C."/>
            <person name="Sekiguchi K."/>
            <person name="Semple C.A."/>
            <person name="Seno S."/>
            <person name="Sessa L."/>
            <person name="Sheng Y."/>
            <person name="Shibata Y."/>
            <person name="Shimada H."/>
            <person name="Shimada K."/>
            <person name="Silva D."/>
            <person name="Sinclair B."/>
            <person name="Sperling S."/>
            <person name="Stupka E."/>
            <person name="Sugiura K."/>
            <person name="Sultana R."/>
            <person name="Takenaka Y."/>
            <person name="Taki K."/>
            <person name="Tammoja K."/>
            <person name="Tan S.L."/>
            <person name="Tang S."/>
            <person name="Taylor M.S."/>
            <person name="Tegner J."/>
            <person name="Teichmann S.A."/>
            <person name="Ueda H.R."/>
            <person name="van Nimwegen E."/>
            <person name="Verardo R."/>
            <person name="Wei C.L."/>
            <person name="Yagi K."/>
            <person name="Yamanishi H."/>
            <person name="Zabarovsky E."/>
            <person name="Zhu S."/>
            <person name="Zimmer A."/>
            <person name="Hide W."/>
            <person name="Bult C."/>
            <person name="Grimmond S.M."/>
            <person name="Teasdale R.D."/>
            <person name="Liu E.T."/>
            <person name="Brusic V."/>
            <person name="Quackenbush J."/>
            <person name="Wahlestedt C."/>
            <person name="Mattick J.S."/>
            <person name="Hume D.A."/>
            <person name="Kai C."/>
            <person name="Sasaki D."/>
            <person name="Tomaru Y."/>
            <person name="Fukuda S."/>
            <person name="Kanamori-Katayama M."/>
            <person name="Suzuki M."/>
            <person name="Aoki J."/>
            <person name="Arakawa T."/>
            <person name="Iida J."/>
            <person name="Imamura K."/>
            <person name="Itoh M."/>
            <person name="Kato T."/>
            <person name="Kawaji H."/>
            <person name="Kawagashira N."/>
            <person name="Kawashima T."/>
            <person name="Kojima M."/>
            <person name="Kondo S."/>
            <person name="Konno H."/>
            <person name="Nakano K."/>
            <person name="Ninomiya N."/>
            <person name="Nishio T."/>
            <person name="Okada M."/>
            <person name="Plessy C."/>
            <person name="Shibata K."/>
            <person name="Shiraki T."/>
            <person name="Suzuki S."/>
            <person name="Tagami M."/>
            <person name="Waki K."/>
            <person name="Watahiki A."/>
            <person name="Okamura-Oho Y."/>
            <person name="Suzuki H."/>
            <person name="Kawai J."/>
            <person name="Hayashizaki Y."/>
        </authorList>
    </citation>
    <scope>NUCLEOTIDE SEQUENCE [LARGE SCALE MRNA]</scope>
    <source>
        <strain>C57BL/6J</strain>
    </source>
</reference>
<reference key="2">
    <citation type="journal article" date="2010" name="Cell">
        <title>A tissue-specific atlas of mouse protein phosphorylation and expression.</title>
        <authorList>
            <person name="Huttlin E.L."/>
            <person name="Jedrychowski M.P."/>
            <person name="Elias J.E."/>
            <person name="Goswami T."/>
            <person name="Rad R."/>
            <person name="Beausoleil S.A."/>
            <person name="Villen J."/>
            <person name="Haas W."/>
            <person name="Sowa M.E."/>
            <person name="Gygi S.P."/>
        </authorList>
    </citation>
    <scope>IDENTIFICATION BY MASS SPECTROMETRY [LARGE SCALE ANALYSIS]</scope>
    <source>
        <tissue>Brain</tissue>
        <tissue>Brown adipose tissue</tissue>
        <tissue>Heart</tissue>
        <tissue>Kidney</tissue>
        <tissue>Liver</tissue>
        <tissue>Lung</tissue>
        <tissue>Pancreas</tissue>
        <tissue>Spleen</tissue>
        <tissue>Testis</tissue>
    </source>
</reference>
<reference key="3">
    <citation type="journal article" date="2013" name="Mol. Cell">
        <title>SIRT5-mediated lysine desuccinylation impacts diverse metabolic pathways.</title>
        <authorList>
            <person name="Park J."/>
            <person name="Chen Y."/>
            <person name="Tishkoff D.X."/>
            <person name="Peng C."/>
            <person name="Tan M."/>
            <person name="Dai L."/>
            <person name="Xie Z."/>
            <person name="Zhang Y."/>
            <person name="Zwaans B.M."/>
            <person name="Skinner M.E."/>
            <person name="Lombard D.B."/>
            <person name="Zhao Y."/>
        </authorList>
    </citation>
    <scope>ACETYLATION [LARGE SCALE ANALYSIS] AT LYS-972 AND LYS-1049</scope>
    <scope>IDENTIFICATION BY MASS SPECTROMETRY [LARGE SCALE ANALYSIS]</scope>
    <source>
        <tissue>Embryonic fibroblast</tissue>
    </source>
</reference>
<sequence length="1178" mass="134192">MAGRKGTAKVDFLKEIEKEAQQKWEAEKVFEVSASRLEKQKQSSKGKYFVTFPYPYMNGRLHLGHTFSLSKCEFAVGYQRLKGKSCLFPFGLHCTGMPIKACADKLKREIELYGCPPDFPEEEEEEEESSAKPGDIVVRDKAKGKKSKAAAKAGSSKYQWDIMKSLGLSDDDIVKFSEAEHWLDYFPPLAVQDLKTIGLKVDWRRSFITTDVNPYYDSFVRWQFLTLRERNKIKFGKRYTIYSPKDGQPCMDHDRQTGEGVGPQEYTLVKLKVLEPYPSKLSGLKGKNIFLVAATLRPETMFGQTNCWVRPDMKYIGFETANGDIFICTQRAARNMSYQGFTKHNGVVPVVKELMGEEILGASLSAPLTCYKVVYVLPMLTIKEDKGTGVVTSVPSDSPDDLAALRDLKKKQALRTKFGIRDDMVLPFEPVPVLEIPGIGNLPAVTVCDELKIQSQNDREKLAEAKEKLYLRGFYDGVMLVDGFKGQKIQHVKKTIQKNMIDAGDALIYMEPEKQVMSRSADECVVALCDQWYLDYGDENWKKQTFQCLKNMETFCEESRKNFEASLDWLQEHACSRTYGLGTRLPWDEQWLIESLSDSTIYMAFYTVAHLLQGGDLNGQAESPLGIRPQQMTKDVWDYVFFKDAPFPKTQIPKEKLDQLKQEFEFWYPVDLRASGKDLIPNHLSYYIYNHVAMWPEQSDKWPVSVRANGHLLLNSEKMSKSTGNFLTLSQAVDKFSADGMRLALADAGDTVEDANFVEAMADAGILRLYTWVEWVKEMLASCSSLRSGPADSFNDRVFASEMNAGIIKTDQNYEKMMFKEALKTGFFEFQAAKDKYRELATEGMHRELVFRFIEVQTILLTPFCPHLCEHIWTLLGKPDSIMHASWPVAGPVDESLIRSSQYLMEVAHDLRLRLKNYMMPAKGKKTDKQPAQRPSHCTIYVAKNYPVWQHITLTTLRSHFEANNGKLPDNKVIASELGSLPELKKYMKKVMPFVAMIKENMEKKGPRVLDLELEFDEQAVLMENIVYLTNSLELEHIEVKFASEAEDKVREECCPGKPLNVFRTEPGVPVSLVNPQPSSGHFSTKIDIRQGDSCESIIRRLMKTDRGIKDLSKVKLMRFDDPLLGPRRVPVLGREHSEKTLISENAVFHVDLVSKKVHLTENGLRTDIGDTMVYLVH</sequence>
<accession>Q8BMJ2</accession>
<accession>Q8BKW9</accession>
<gene>
    <name type="primary">Lars1</name>
    <name type="synonym">Lars</name>
</gene>
<proteinExistence type="evidence at protein level"/>
<name>SYLC_MOUSE</name>
<keyword id="KW-0007">Acetylation</keyword>
<keyword id="KW-0030">Aminoacyl-tRNA synthetase</keyword>
<keyword id="KW-0067">ATP-binding</keyword>
<keyword id="KW-0963">Cytoplasm</keyword>
<keyword id="KW-0436">Ligase</keyword>
<keyword id="KW-0547">Nucleotide-binding</keyword>
<keyword id="KW-0597">Phosphoprotein</keyword>
<keyword id="KW-0648">Protein biosynthesis</keyword>
<keyword id="KW-1185">Reference proteome</keyword>
<organism>
    <name type="scientific">Mus musculus</name>
    <name type="common">Mouse</name>
    <dbReference type="NCBI Taxonomy" id="10090"/>
    <lineage>
        <taxon>Eukaryota</taxon>
        <taxon>Metazoa</taxon>
        <taxon>Chordata</taxon>
        <taxon>Craniata</taxon>
        <taxon>Vertebrata</taxon>
        <taxon>Euteleostomi</taxon>
        <taxon>Mammalia</taxon>
        <taxon>Eutheria</taxon>
        <taxon>Euarchontoglires</taxon>
        <taxon>Glires</taxon>
        <taxon>Rodentia</taxon>
        <taxon>Myomorpha</taxon>
        <taxon>Muroidea</taxon>
        <taxon>Muridae</taxon>
        <taxon>Murinae</taxon>
        <taxon>Mus</taxon>
        <taxon>Mus</taxon>
    </lineage>
</organism>
<comment type="function">
    <text evidence="2">Aminoacyl-tRNA synthetase that catalyzes the specific attachment of leucine to its cognate tRNA (tRNA(Leu)). It performs tRNA aminoacylation in a two-step reaction: Leu is initially activated by ATP to form a leucyl-adenylate (Leu-AMP) intermediate; then the leucyl moiety is transferred to the acceptor 3' end of the tRNA to yield leucyl-tRNA. To improve the fidelity of catalytic reactions, it is also able to hydrolyze misactivated aminoacyl-adenylate intermediates (pre-transfer editing) and mischarged aminoacyl-tRNAs (post-transfer editing).</text>
</comment>
<comment type="catalytic activity">
    <reaction evidence="2">
        <text>tRNA(Leu) + L-leucine + ATP = L-leucyl-tRNA(Leu) + AMP + diphosphate</text>
        <dbReference type="Rhea" id="RHEA:11688"/>
        <dbReference type="Rhea" id="RHEA-COMP:9613"/>
        <dbReference type="Rhea" id="RHEA-COMP:9622"/>
        <dbReference type="ChEBI" id="CHEBI:30616"/>
        <dbReference type="ChEBI" id="CHEBI:33019"/>
        <dbReference type="ChEBI" id="CHEBI:57427"/>
        <dbReference type="ChEBI" id="CHEBI:78442"/>
        <dbReference type="ChEBI" id="CHEBI:78494"/>
        <dbReference type="ChEBI" id="CHEBI:456215"/>
        <dbReference type="EC" id="6.1.1.4"/>
    </reaction>
    <physiologicalReaction direction="left-to-right" evidence="2">
        <dbReference type="Rhea" id="RHEA:11689"/>
    </physiologicalReaction>
</comment>
<comment type="catalytic activity">
    <reaction evidence="2">
        <text>L-methionyl-tRNA(Leu) + H2O = tRNA(Leu) + L-methionine + H(+)</text>
        <dbReference type="Rhea" id="RHEA:77535"/>
        <dbReference type="Rhea" id="RHEA-COMP:9613"/>
        <dbReference type="Rhea" id="RHEA-COMP:18931"/>
        <dbReference type="ChEBI" id="CHEBI:15377"/>
        <dbReference type="ChEBI" id="CHEBI:15378"/>
        <dbReference type="ChEBI" id="CHEBI:57844"/>
        <dbReference type="ChEBI" id="CHEBI:78442"/>
        <dbReference type="ChEBI" id="CHEBI:78530"/>
    </reaction>
    <physiologicalReaction direction="left-to-right" evidence="2">
        <dbReference type="Rhea" id="RHEA:77536"/>
    </physiologicalReaction>
</comment>
<comment type="activity regulation">
    <text evidence="2">5-fluoro-1,3-dihydro-1-hydroxy-1,2-benzoxaborole inhibits LARS1 by forming a covalent adduct with the 3' adenosine of tRNA(Leu) at the editing site, thus locking the enzyme in an inactive conformation.</text>
</comment>
<comment type="subcellular location">
    <subcellularLocation>
        <location evidence="1">Cytoplasm</location>
    </subcellularLocation>
</comment>
<comment type="domain">
    <text evidence="2">The structure of cytoplasmic leucine-tRNA ligase includes four main functional domains: the Rossmann-fold aminoacylation domain, the editing domain known as connective peptide 1 (CP1), the anticodon binding domain for tRNA recognition, and the vertebrate C-terminal (VC) domain for tRNA binding.</text>
</comment>
<comment type="similarity">
    <text evidence="3">Belongs to the class-I aminoacyl-tRNA synthetase family.</text>
</comment>
<dbReference type="EC" id="6.1.1.4" evidence="2"/>
<dbReference type="EMBL" id="AK030778">
    <property type="protein sequence ID" value="BAC27133.1"/>
    <property type="molecule type" value="mRNA"/>
</dbReference>
<dbReference type="EMBL" id="AK049472">
    <property type="protein sequence ID" value="BAC33766.1"/>
    <property type="molecule type" value="mRNA"/>
</dbReference>
<dbReference type="CCDS" id="CCDS37796.1"/>
<dbReference type="RefSeq" id="NP_598898.2">
    <property type="nucleotide sequence ID" value="NM_134137.2"/>
</dbReference>
<dbReference type="SMR" id="Q8BMJ2"/>
<dbReference type="BioGRID" id="223191">
    <property type="interactions" value="33"/>
</dbReference>
<dbReference type="FunCoup" id="Q8BMJ2">
    <property type="interactions" value="4055"/>
</dbReference>
<dbReference type="IntAct" id="Q8BMJ2">
    <property type="interactions" value="2"/>
</dbReference>
<dbReference type="STRING" id="10090.ENSMUSP00000095197"/>
<dbReference type="GlyGen" id="Q8BMJ2">
    <property type="glycosylation" value="1 site, 1 O-linked glycan (1 site)"/>
</dbReference>
<dbReference type="iPTMnet" id="Q8BMJ2"/>
<dbReference type="PhosphoSitePlus" id="Q8BMJ2"/>
<dbReference type="SwissPalm" id="Q8BMJ2"/>
<dbReference type="jPOST" id="Q8BMJ2"/>
<dbReference type="PaxDb" id="10090-ENSMUSP00000095197"/>
<dbReference type="ProteomicsDB" id="253439"/>
<dbReference type="Pumba" id="Q8BMJ2"/>
<dbReference type="Antibodypedia" id="45640">
    <property type="antibodies" value="117 antibodies from 31 providers"/>
</dbReference>
<dbReference type="DNASU" id="107045"/>
<dbReference type="Ensembl" id="ENSMUST00000097590.5">
    <property type="protein sequence ID" value="ENSMUSP00000095197.4"/>
    <property type="gene ID" value="ENSMUSG00000024493.10"/>
</dbReference>
<dbReference type="GeneID" id="107045"/>
<dbReference type="KEGG" id="mmu:107045"/>
<dbReference type="UCSC" id="uc008etp.1">
    <property type="organism name" value="mouse"/>
</dbReference>
<dbReference type="AGR" id="MGI:1913808"/>
<dbReference type="CTD" id="51520"/>
<dbReference type="MGI" id="MGI:1913808">
    <property type="gene designation" value="Lars1"/>
</dbReference>
<dbReference type="VEuPathDB" id="HostDB:ENSMUSG00000024493"/>
<dbReference type="eggNOG" id="KOG0437">
    <property type="taxonomic scope" value="Eukaryota"/>
</dbReference>
<dbReference type="GeneTree" id="ENSGT00390000012163"/>
<dbReference type="HOGENOM" id="CLU_004174_1_0_1"/>
<dbReference type="InParanoid" id="Q8BMJ2"/>
<dbReference type="OMA" id="KFIEWQF"/>
<dbReference type="OrthoDB" id="10249672at2759"/>
<dbReference type="PhylomeDB" id="Q8BMJ2"/>
<dbReference type="TreeFam" id="TF105718"/>
<dbReference type="Reactome" id="R-MMU-9856649">
    <property type="pathway name" value="Transcriptional and post-translational regulation of MITF-M expression and activity"/>
</dbReference>
<dbReference type="BioGRID-ORCS" id="107045">
    <property type="hits" value="32 hits in 116 CRISPR screens"/>
</dbReference>
<dbReference type="ChiTaRS" id="Lars">
    <property type="organism name" value="mouse"/>
</dbReference>
<dbReference type="PRO" id="PR:Q8BMJ2"/>
<dbReference type="Proteomes" id="UP000000589">
    <property type="component" value="Chromosome 18"/>
</dbReference>
<dbReference type="RNAct" id="Q8BMJ2">
    <property type="molecule type" value="protein"/>
</dbReference>
<dbReference type="Bgee" id="ENSMUSG00000024493">
    <property type="expression patterns" value="Expressed in floor plate of midbrain and 294 other cell types or tissues"/>
</dbReference>
<dbReference type="ExpressionAtlas" id="Q8BMJ2">
    <property type="expression patterns" value="baseline and differential"/>
</dbReference>
<dbReference type="GO" id="GO:0017101">
    <property type="term" value="C:aminoacyl-tRNA synthetase multienzyme complex"/>
    <property type="evidence" value="ECO:0000314"/>
    <property type="project" value="CAFA"/>
</dbReference>
<dbReference type="GO" id="GO:0005829">
    <property type="term" value="C:cytosol"/>
    <property type="evidence" value="ECO:0007669"/>
    <property type="project" value="Ensembl"/>
</dbReference>
<dbReference type="GO" id="GO:0005783">
    <property type="term" value="C:endoplasmic reticulum"/>
    <property type="evidence" value="ECO:0007669"/>
    <property type="project" value="Ensembl"/>
</dbReference>
<dbReference type="GO" id="GO:0005764">
    <property type="term" value="C:lysosome"/>
    <property type="evidence" value="ECO:0007669"/>
    <property type="project" value="Ensembl"/>
</dbReference>
<dbReference type="GO" id="GO:0016604">
    <property type="term" value="C:nuclear body"/>
    <property type="evidence" value="ECO:0007669"/>
    <property type="project" value="Ensembl"/>
</dbReference>
<dbReference type="GO" id="GO:0002161">
    <property type="term" value="F:aminoacyl-tRNA deacylase activity"/>
    <property type="evidence" value="ECO:0000250"/>
    <property type="project" value="UniProtKB"/>
</dbReference>
<dbReference type="GO" id="GO:0005524">
    <property type="term" value="F:ATP binding"/>
    <property type="evidence" value="ECO:0007669"/>
    <property type="project" value="UniProtKB-KW"/>
</dbReference>
<dbReference type="GO" id="GO:0004819">
    <property type="term" value="F:glutamine-tRNA ligase activity"/>
    <property type="evidence" value="ECO:0007669"/>
    <property type="project" value="Ensembl"/>
</dbReference>
<dbReference type="GO" id="GO:0005096">
    <property type="term" value="F:GTPase activator activity"/>
    <property type="evidence" value="ECO:0007669"/>
    <property type="project" value="Ensembl"/>
</dbReference>
<dbReference type="GO" id="GO:0004823">
    <property type="term" value="F:leucine-tRNA ligase activity"/>
    <property type="evidence" value="ECO:0000315"/>
    <property type="project" value="CAFA"/>
</dbReference>
<dbReference type="GO" id="GO:0071233">
    <property type="term" value="P:cellular response to L-leucine"/>
    <property type="evidence" value="ECO:0007669"/>
    <property type="project" value="Ensembl"/>
</dbReference>
<dbReference type="GO" id="GO:1990253">
    <property type="term" value="P:cellular response to leucine starvation"/>
    <property type="evidence" value="ECO:0007669"/>
    <property type="project" value="Ensembl"/>
</dbReference>
<dbReference type="GO" id="GO:0006425">
    <property type="term" value="P:glutaminyl-tRNA aminoacylation"/>
    <property type="evidence" value="ECO:0007669"/>
    <property type="project" value="Ensembl"/>
</dbReference>
<dbReference type="GO" id="GO:0006429">
    <property type="term" value="P:leucyl-tRNA aminoacylation"/>
    <property type="evidence" value="ECO:0000314"/>
    <property type="project" value="CAFA"/>
</dbReference>
<dbReference type="GO" id="GO:1904263">
    <property type="term" value="P:positive regulation of TORC1 signaling"/>
    <property type="evidence" value="ECO:0007669"/>
    <property type="project" value="Ensembl"/>
</dbReference>
<dbReference type="GO" id="GO:0008361">
    <property type="term" value="P:regulation of cell size"/>
    <property type="evidence" value="ECO:0007669"/>
    <property type="project" value="Ensembl"/>
</dbReference>
<dbReference type="CDD" id="cd07959">
    <property type="entry name" value="Anticodon_Ia_Leu_AEc"/>
    <property type="match status" value="1"/>
</dbReference>
<dbReference type="FunFam" id="3.40.50.620:FF:000326">
    <property type="entry name" value="Leucine--tRNA ligase, cytoplasmic"/>
    <property type="match status" value="1"/>
</dbReference>
<dbReference type="FunFam" id="3.90.740.10:FF:000001">
    <property type="entry name" value="Leucine--tRNA ligase, cytoplasmic"/>
    <property type="match status" value="1"/>
</dbReference>
<dbReference type="FunFam" id="1.10.730.10:FF:000084">
    <property type="entry name" value="Leucyl-tRNA synthetase b"/>
    <property type="match status" value="1"/>
</dbReference>
<dbReference type="Gene3D" id="3.40.50.620">
    <property type="entry name" value="HUPs"/>
    <property type="match status" value="1"/>
</dbReference>
<dbReference type="Gene3D" id="1.10.730.10">
    <property type="entry name" value="Isoleucyl-tRNA Synthetase, Domain 1"/>
    <property type="match status" value="1"/>
</dbReference>
<dbReference type="Gene3D" id="3.90.740.10">
    <property type="entry name" value="Valyl/Leucyl/Isoleucyl-tRNA synthetase, editing domain"/>
    <property type="match status" value="1"/>
</dbReference>
<dbReference type="InterPro" id="IPR001412">
    <property type="entry name" value="aa-tRNA-synth_I_CS"/>
</dbReference>
<dbReference type="InterPro" id="IPR002300">
    <property type="entry name" value="aa-tRNA-synth_Ia"/>
</dbReference>
<dbReference type="InterPro" id="IPR054509">
    <property type="entry name" value="LARS1_ULD"/>
</dbReference>
<dbReference type="InterPro" id="IPR004493">
    <property type="entry name" value="Leu-tRNA-synth_Ia_arc/euk"/>
</dbReference>
<dbReference type="InterPro" id="IPR013155">
    <property type="entry name" value="M/V/L/I-tRNA-synth_anticd-bd"/>
</dbReference>
<dbReference type="InterPro" id="IPR055416">
    <property type="entry name" value="RBD_LARS1"/>
</dbReference>
<dbReference type="InterPro" id="IPR014729">
    <property type="entry name" value="Rossmann-like_a/b/a_fold"/>
</dbReference>
<dbReference type="InterPro" id="IPR009080">
    <property type="entry name" value="tRNAsynth_Ia_anticodon-bd"/>
</dbReference>
<dbReference type="InterPro" id="IPR009008">
    <property type="entry name" value="Val/Leu/Ile-tRNA-synth_edit"/>
</dbReference>
<dbReference type="NCBIfam" id="TIGR00395">
    <property type="entry name" value="leuS_arch"/>
    <property type="match status" value="1"/>
</dbReference>
<dbReference type="NCBIfam" id="NF008957">
    <property type="entry name" value="PRK12300.1"/>
    <property type="match status" value="1"/>
</dbReference>
<dbReference type="PANTHER" id="PTHR45794:SF1">
    <property type="entry name" value="LEUCINE--TRNA LIGASE, CYTOPLASMIC"/>
    <property type="match status" value="1"/>
</dbReference>
<dbReference type="PANTHER" id="PTHR45794">
    <property type="entry name" value="LEUCYL-TRNA SYNTHETASE"/>
    <property type="match status" value="1"/>
</dbReference>
<dbReference type="Pfam" id="PF08264">
    <property type="entry name" value="Anticodon_1"/>
    <property type="match status" value="1"/>
</dbReference>
<dbReference type="Pfam" id="PF24810">
    <property type="entry name" value="RBD_LARS1"/>
    <property type="match status" value="1"/>
</dbReference>
<dbReference type="Pfam" id="PF00133">
    <property type="entry name" value="tRNA-synt_1"/>
    <property type="match status" value="2"/>
</dbReference>
<dbReference type="Pfam" id="PF22947">
    <property type="entry name" value="ULD_3"/>
    <property type="match status" value="1"/>
</dbReference>
<dbReference type="SUPFAM" id="SSF47323">
    <property type="entry name" value="Anticodon-binding domain of a subclass of class I aminoacyl-tRNA synthetases"/>
    <property type="match status" value="1"/>
</dbReference>
<dbReference type="SUPFAM" id="SSF52374">
    <property type="entry name" value="Nucleotidylyl transferase"/>
    <property type="match status" value="1"/>
</dbReference>
<dbReference type="SUPFAM" id="SSF50677">
    <property type="entry name" value="ValRS/IleRS/LeuRS editing domain"/>
    <property type="match status" value="1"/>
</dbReference>
<dbReference type="PROSITE" id="PS00178">
    <property type="entry name" value="AA_TRNA_LIGASE_I"/>
    <property type="match status" value="1"/>
</dbReference>